<gene>
    <name type="primary">Pik3c2g</name>
</gene>
<reference key="1">
    <citation type="journal article" date="1998" name="J. Biol. Chem.">
        <title>A novel class II phosphoinositide 3-kinase predominantly expressed in the liver and its enhanced expression during liver regeneration.</title>
        <authorList>
            <person name="Ono F."/>
            <person name="Nakagawa T."/>
            <person name="Saito S."/>
            <person name="Owada Y."/>
            <person name="Sakagami H."/>
            <person name="Goto K."/>
            <person name="Suzuki M."/>
            <person name="Matsuno S."/>
            <person name="Kondo H."/>
        </authorList>
    </citation>
    <scope>NUCLEOTIDE SEQUENCE [MRNA]</scope>
    <scope>FUNCTION</scope>
    <scope>CATALYTIC ACTIVITY</scope>
    <scope>SUBCELLULAR LOCATION</scope>
    <scope>TISSUE SPECIFICITY</scope>
    <scope>DEVELOPMENTAL STAGE</scope>
    <source>
        <tissue>Regenerating liver</tissue>
    </source>
</reference>
<keyword id="KW-0067">ATP-binding</keyword>
<keyword id="KW-0145">Chemotaxis</keyword>
<keyword id="KW-0418">Kinase</keyword>
<keyword id="KW-0443">Lipid metabolism</keyword>
<keyword id="KW-0472">Membrane</keyword>
<keyword id="KW-0547">Nucleotide-binding</keyword>
<keyword id="KW-1185">Reference proteome</keyword>
<keyword id="KW-0808">Transferase</keyword>
<comment type="function">
    <text evidence="1 9">Generates phosphatidylinositol 3-phosphate (PtdIns3P) and phosphatidylinositol 3,4-bisphosphate (PtdIns(3,4)P2) that act as second messengers (PubMed:9516481). May play a role in SDF1A-stimulated chemotaxis (By similarity).</text>
</comment>
<comment type="catalytic activity">
    <reaction evidence="9">
        <text>a 1,2-diacyl-sn-glycero-3-phospho-(1D-myo-inositol) + ATP = a 1,2-diacyl-sn-glycero-3-phospho-(1D-myo-inositol-3-phosphate) + ADP + H(+)</text>
        <dbReference type="Rhea" id="RHEA:12709"/>
        <dbReference type="ChEBI" id="CHEBI:15378"/>
        <dbReference type="ChEBI" id="CHEBI:30616"/>
        <dbReference type="ChEBI" id="CHEBI:57880"/>
        <dbReference type="ChEBI" id="CHEBI:58088"/>
        <dbReference type="ChEBI" id="CHEBI:456216"/>
        <dbReference type="EC" id="2.7.1.137"/>
    </reaction>
    <physiologicalReaction direction="left-to-right" evidence="10">
        <dbReference type="Rhea" id="RHEA:12710"/>
    </physiologicalReaction>
</comment>
<comment type="catalytic activity">
    <reaction evidence="9">
        <text>a 1,2-diacyl-sn-glycero-3-phospho-(1D-myo-inositol 4-phosphate) + ATP = a 1,2-diacyl-sn-glycero-3-phospho-(1D-myo-inositol-3,4-bisphosphate) + ADP + H(+)</text>
        <dbReference type="Rhea" id="RHEA:18373"/>
        <dbReference type="ChEBI" id="CHEBI:15378"/>
        <dbReference type="ChEBI" id="CHEBI:30616"/>
        <dbReference type="ChEBI" id="CHEBI:57658"/>
        <dbReference type="ChEBI" id="CHEBI:58178"/>
        <dbReference type="ChEBI" id="CHEBI:456216"/>
        <dbReference type="EC" id="2.7.1.154"/>
    </reaction>
    <physiologicalReaction direction="left-to-right" evidence="10">
        <dbReference type="Rhea" id="RHEA:18374"/>
    </physiologicalReaction>
</comment>
<comment type="subcellular location">
    <subcellularLocation>
        <location evidence="9">Membrane</location>
        <topology evidence="9">Peripheral membrane protein</topology>
    </subcellularLocation>
</comment>
<comment type="tissue specificity">
    <text evidence="9">Predominantly expressed in normal liver. High levels also found in regenerating liver. Very low levels found in heart and testis.</text>
</comment>
<comment type="developmental stage">
    <text evidence="9">Higher levels of expression found in adult liver than in fetal liver.</text>
</comment>
<comment type="similarity">
    <text evidence="6 7">Belongs to the PI3/PI4-kinase family.</text>
</comment>
<name>P3C2G_RAT</name>
<evidence type="ECO:0000250" key="1">
    <source>
        <dbReference type="UniProtKB" id="O70167"/>
    </source>
</evidence>
<evidence type="ECO:0000255" key="2">
    <source>
        <dbReference type="PROSITE-ProRule" id="PRU00041"/>
    </source>
</evidence>
<evidence type="ECO:0000255" key="3">
    <source>
        <dbReference type="PROSITE-ProRule" id="PRU00147"/>
    </source>
</evidence>
<evidence type="ECO:0000255" key="4">
    <source>
        <dbReference type="PROSITE-ProRule" id="PRU00269"/>
    </source>
</evidence>
<evidence type="ECO:0000255" key="5">
    <source>
        <dbReference type="PROSITE-ProRule" id="PRU00878"/>
    </source>
</evidence>
<evidence type="ECO:0000255" key="6">
    <source>
        <dbReference type="PROSITE-ProRule" id="PRU00879"/>
    </source>
</evidence>
<evidence type="ECO:0000255" key="7">
    <source>
        <dbReference type="PROSITE-ProRule" id="PRU00880"/>
    </source>
</evidence>
<evidence type="ECO:0000256" key="8">
    <source>
        <dbReference type="SAM" id="MobiDB-lite"/>
    </source>
</evidence>
<evidence type="ECO:0000269" key="9">
    <source>
    </source>
</evidence>
<evidence type="ECO:0000305" key="10">
    <source>
    </source>
</evidence>
<accession>O70173</accession>
<sequence length="1505" mass="170975">MAYNWQTEPNRAEPQEGGHDHQQCHHADQHLSSRQVRLGFDQLVEELSNKTPLPEDEKEGTCFVPDTPNLDSKWQSIYGPHPRHFNEFTSQSPHFSQLPFGKASAIGFNPAVLPAHQFIHEGASWRNPTRKYHGGEDPRFSALTPSSTGLDKCHQQGQSGTEHCNYYVEPENNVPHHYSPYSMDSIPDSEEKGSGDADLVEPSLVFSKDSFLPRASENMSVESTEPIGCPLEIVEAPQGSNKSLASFCNNVTKIRGLYHASDTNSNSGKIWAITTAYPSRLFADTQFRVKISTDNSAQLLLLKPPANYLVKDLIAEILLLCANEQLSPKEYLLSICGSEEFLQTDHCLGSHKIFQKSKSVIQLHLQRSRDTPGKLSRKRDDDRSRVHLNQLLEFTHIWKISRQCLSTVMKSYNLHVEHLLKTQEDVEEKPLSSMFSCGRHPPQPHGNDIIEDVRNICSVLGCIETKQVSDAVKELTLILQRPSQNFHQNSETSKKGFIENVTSELSRSLHQLVDVYCSSFCTDFRPARAPGGVSRDHAGLHSHLSFTVCSLHNVPETWAHSYKAFSFSCWLTYAGKKLCQVKSCRSLPVTKSFSFSVNWNEIINFPLEIKSLPRESMLVIKLFGIDSATHSANLLAWTCLPLFPKEKSPLGSRLLSMTLQSEPPIEMMAPGVWDGSQPTPLTLQIDFPAATWEYVKPETEENRTDHQEPPRECLKHIARLSQKQPPLLLSVEKRRYLWFYRFYCNNENSSLPLVLGSAPGWDEGTVSEMHAVLRRWTFSHPLEALGLLTSRFPDQDIREVAVQQLDNFLTDELLDCLPQLVQAVKFEWSLESPLVELLLHRSLQSIRVAHRLFWLLRDAQGEDYFKSWYQELLAALQFCAGEALIEELSKEQKLVKLLGDIGEKVKSAGDAQRKDVLKKEIGSLEEFFKDIKTCHLPLNPALCVKGIDRDACSYFTSNALPLKITFINANPMGKNISVIFKAGDDLRQDMLVLQIIQVMDNVWLQEGLDMQMIIYGCLATGKAQGFIEMVPDAVTLAKIHLHSGLIGPLKENTIKKWFSQHNHLKEDYEKALRNFFYSCAGWCVVTFILGVCDRHNDNIMLTKSGHMFHIDFGKFLGHAQTFGGIKRDRAPFIFTSEMEYFITEGGKNTQHFQDFVELCCRAYNIVRKHSQLLLSLLEMMLHAGLPELRGIEDLKYVHDNLRPQDTDLEATSHFTTKIKQSLECFPVKLNNLIHTLAQMPAFSLARPAPQTPPQECCVLNKTRTIQRVTILGFSKTHSNLYLIEVTRSDNRKNLAKKSFEQFYRLHSQIQKQFPLLTLPEFPHWWHLPFTDSHHERIRDLSHYVEQVLHGSYEVANSDCVLSFFLSEHIQQTLEDSPFVDPGDHSPDKSPQVQLLMTYEDTKLTILVKHLKNIHLPDGSAPSAHVEIYLLPHPSEVRRKKTKCVPKCTDPTYNEIVVYDDVSGLQGHVLMLIVKSKTVFVGAVNIQLCSVPLNEEKWYPLGNSII</sequence>
<proteinExistence type="evidence at protein level"/>
<feature type="chain" id="PRO_0000088801" description="Phosphatidylinositol 3-kinase C2 domain-containing subunit gamma">
    <location>
        <begin position="1"/>
        <end position="1505"/>
    </location>
</feature>
<feature type="domain" description="PI3K-RBD" evidence="6">
    <location>
        <begin position="278"/>
        <end position="370"/>
    </location>
</feature>
<feature type="domain" description="C2 PI3K-type" evidence="7">
    <location>
        <begin position="540"/>
        <end position="688"/>
    </location>
</feature>
<feature type="domain" description="PIK helical" evidence="5">
    <location>
        <begin position="703"/>
        <end position="879"/>
    </location>
</feature>
<feature type="domain" description="PI3K/PI4K catalytic" evidence="4">
    <location>
        <begin position="948"/>
        <end position="1226"/>
    </location>
</feature>
<feature type="domain" description="PX" evidence="3">
    <location>
        <begin position="1259"/>
        <end position="1371"/>
    </location>
</feature>
<feature type="domain" description="C2" evidence="2">
    <location>
        <begin position="1384"/>
        <end position="1505"/>
    </location>
</feature>
<feature type="region of interest" description="Disordered" evidence="8">
    <location>
        <begin position="1"/>
        <end position="32"/>
    </location>
</feature>
<feature type="region of interest" description="G-loop" evidence="4">
    <location>
        <begin position="954"/>
        <end position="960"/>
    </location>
</feature>
<feature type="region of interest" description="Catalytic loop" evidence="4">
    <location>
        <begin position="1090"/>
        <end position="1098"/>
    </location>
</feature>
<feature type="region of interest" description="Activation loop" evidence="4">
    <location>
        <begin position="1109"/>
        <end position="1135"/>
    </location>
</feature>
<feature type="compositionally biased region" description="Basic and acidic residues" evidence="8">
    <location>
        <begin position="10"/>
        <end position="31"/>
    </location>
</feature>
<protein>
    <recommendedName>
        <fullName evidence="10">Phosphatidylinositol 3-kinase C2 domain-containing subunit gamma</fullName>
        <shortName>PI3K-C2-gamma</shortName>
        <shortName>PtdIns-3-kinase C2 subunit gamma</shortName>
        <ecNumber evidence="9">2.7.1.137</ecNumber>
        <ecNumber evidence="9">2.7.1.154</ecNumber>
    </recommendedName>
    <alternativeName>
        <fullName>Phosphoinositide 3-kinase-C2-gamma</fullName>
    </alternativeName>
</protein>
<dbReference type="EC" id="2.7.1.137" evidence="9"/>
<dbReference type="EC" id="2.7.1.154" evidence="9"/>
<dbReference type="EMBL" id="AB009636">
    <property type="protein sequence ID" value="BAA25634.1"/>
    <property type="molecule type" value="mRNA"/>
</dbReference>
<dbReference type="RefSeq" id="NP_446375.1">
    <property type="nucleotide sequence ID" value="NM_053923.1"/>
</dbReference>
<dbReference type="SMR" id="O70173"/>
<dbReference type="FunCoup" id="O70173">
    <property type="interactions" value="41"/>
</dbReference>
<dbReference type="STRING" id="10116.ENSRNOP00000043855"/>
<dbReference type="PhosphoSitePlus" id="O70173"/>
<dbReference type="PaxDb" id="10116-ENSRNOP00000043855"/>
<dbReference type="GeneID" id="116720"/>
<dbReference type="KEGG" id="rno:116720"/>
<dbReference type="UCSC" id="RGD:620231">
    <property type="organism name" value="rat"/>
</dbReference>
<dbReference type="AGR" id="RGD:620231"/>
<dbReference type="CTD" id="5288"/>
<dbReference type="RGD" id="620231">
    <property type="gene designation" value="Pik3c2g"/>
</dbReference>
<dbReference type="eggNOG" id="KOG0905">
    <property type="taxonomic scope" value="Eukaryota"/>
</dbReference>
<dbReference type="InParanoid" id="O70173"/>
<dbReference type="OrthoDB" id="63495at9989"/>
<dbReference type="PhylomeDB" id="O70173"/>
<dbReference type="BRENDA" id="2.7.1.137">
    <property type="organism ID" value="5301"/>
</dbReference>
<dbReference type="BRENDA" id="2.7.1.154">
    <property type="organism ID" value="5301"/>
</dbReference>
<dbReference type="Reactome" id="R-RNO-1660499">
    <property type="pathway name" value="Synthesis of PIPs at the plasma membrane"/>
</dbReference>
<dbReference type="Reactome" id="R-RNO-1660514">
    <property type="pathway name" value="Synthesis of PIPs at the Golgi membrane"/>
</dbReference>
<dbReference type="PRO" id="PR:O70173"/>
<dbReference type="Proteomes" id="UP000002494">
    <property type="component" value="Unplaced"/>
</dbReference>
<dbReference type="GO" id="GO:0005737">
    <property type="term" value="C:cytoplasm"/>
    <property type="evidence" value="ECO:0000318"/>
    <property type="project" value="GO_Central"/>
</dbReference>
<dbReference type="GO" id="GO:0016020">
    <property type="term" value="C:membrane"/>
    <property type="evidence" value="ECO:0000266"/>
    <property type="project" value="RGD"/>
</dbReference>
<dbReference type="GO" id="GO:0005635">
    <property type="term" value="C:nuclear envelope"/>
    <property type="evidence" value="ECO:0000314"/>
    <property type="project" value="RGD"/>
</dbReference>
<dbReference type="GO" id="GO:0005886">
    <property type="term" value="C:plasma membrane"/>
    <property type="evidence" value="ECO:0000318"/>
    <property type="project" value="GO_Central"/>
</dbReference>
<dbReference type="GO" id="GO:0016303">
    <property type="term" value="F:1-phosphatidylinositol-3-kinase activity"/>
    <property type="evidence" value="ECO:0000314"/>
    <property type="project" value="UniProtKB"/>
</dbReference>
<dbReference type="GO" id="GO:0035005">
    <property type="term" value="F:1-phosphatidylinositol-4-phosphate 3-kinase activity"/>
    <property type="evidence" value="ECO:0000314"/>
    <property type="project" value="RGD"/>
</dbReference>
<dbReference type="GO" id="GO:0005524">
    <property type="term" value="F:ATP binding"/>
    <property type="evidence" value="ECO:0007669"/>
    <property type="project" value="UniProtKB-KW"/>
</dbReference>
<dbReference type="GO" id="GO:0035091">
    <property type="term" value="F:phosphatidylinositol binding"/>
    <property type="evidence" value="ECO:0007669"/>
    <property type="project" value="InterPro"/>
</dbReference>
<dbReference type="GO" id="GO:0016477">
    <property type="term" value="P:cell migration"/>
    <property type="evidence" value="ECO:0000318"/>
    <property type="project" value="GO_Central"/>
</dbReference>
<dbReference type="GO" id="GO:0006935">
    <property type="term" value="P:chemotaxis"/>
    <property type="evidence" value="ECO:0000266"/>
    <property type="project" value="RGD"/>
</dbReference>
<dbReference type="GO" id="GO:0043491">
    <property type="term" value="P:phosphatidylinositol 3-kinase/protein kinase B signal transduction"/>
    <property type="evidence" value="ECO:0000318"/>
    <property type="project" value="GO_Central"/>
</dbReference>
<dbReference type="GO" id="GO:0036092">
    <property type="term" value="P:phosphatidylinositol-3-phosphate biosynthetic process"/>
    <property type="evidence" value="ECO:0000314"/>
    <property type="project" value="UniProtKB"/>
</dbReference>
<dbReference type="GO" id="GO:0048015">
    <property type="term" value="P:phosphatidylinositol-mediated signaling"/>
    <property type="evidence" value="ECO:0000318"/>
    <property type="project" value="GO_Central"/>
</dbReference>
<dbReference type="CDD" id="cd04012">
    <property type="entry name" value="C2A_PI3K_class_II"/>
    <property type="match status" value="1"/>
</dbReference>
<dbReference type="FunFam" id="3.30.1010.10:FF:000001">
    <property type="entry name" value="Phosphatidylinositol 4-phosphate 3-kinase C2 domain-containing subunit beta"/>
    <property type="match status" value="1"/>
</dbReference>
<dbReference type="FunFam" id="1.10.1070.11:FF:000013">
    <property type="entry name" value="Phosphatidylinositol 4-phosphate 3-kinase C2 domain-containing subunit gamma"/>
    <property type="match status" value="1"/>
</dbReference>
<dbReference type="FunFam" id="1.25.40.70:FF:000010">
    <property type="entry name" value="Phosphatidylinositol 4-phosphate 3-kinase C2 domain-containing subunit gamma"/>
    <property type="match status" value="1"/>
</dbReference>
<dbReference type="FunFam" id="3.10.20.90:FF:000260">
    <property type="entry name" value="Phosphatidylinositol 4-phosphate 3-kinase C2 domain-containing subunit gamma"/>
    <property type="match status" value="1"/>
</dbReference>
<dbReference type="FunFam" id="3.30.1520.10:FF:000026">
    <property type="entry name" value="Phosphatidylinositol 4-phosphate 3-kinase C2 domain-containing subunit gamma"/>
    <property type="match status" value="1"/>
</dbReference>
<dbReference type="FunFam" id="2.60.40.150:FF:000160">
    <property type="entry name" value="phosphatidylinositol 4-phosphate 3-kinase C2 domain-containing subunit gamma isoform X1"/>
    <property type="match status" value="1"/>
</dbReference>
<dbReference type="FunFam" id="2.60.40.150:FF:000125">
    <property type="entry name" value="Phosphatidylinositol-4-phosphate 3-kinase catalytic subunit type 2 gamma"/>
    <property type="match status" value="1"/>
</dbReference>
<dbReference type="Gene3D" id="2.60.40.150">
    <property type="entry name" value="C2 domain"/>
    <property type="match status" value="2"/>
</dbReference>
<dbReference type="Gene3D" id="1.10.1070.11">
    <property type="entry name" value="Phosphatidylinositol 3-/4-kinase, catalytic domain"/>
    <property type="match status" value="1"/>
</dbReference>
<dbReference type="Gene3D" id="3.10.20.90">
    <property type="entry name" value="Phosphatidylinositol 3-kinase Catalytic Subunit, Chain A, domain 1"/>
    <property type="match status" value="1"/>
</dbReference>
<dbReference type="Gene3D" id="3.30.1010.10">
    <property type="entry name" value="Phosphatidylinositol 3-kinase Catalytic Subunit, Chain A, domain 4"/>
    <property type="match status" value="1"/>
</dbReference>
<dbReference type="Gene3D" id="1.25.40.70">
    <property type="entry name" value="Phosphatidylinositol 3-kinase, accessory domain (PIK)"/>
    <property type="match status" value="1"/>
</dbReference>
<dbReference type="Gene3D" id="3.30.1520.10">
    <property type="entry name" value="Phox-like domain"/>
    <property type="match status" value="1"/>
</dbReference>
<dbReference type="InterPro" id="IPR016024">
    <property type="entry name" value="ARM-type_fold"/>
</dbReference>
<dbReference type="InterPro" id="IPR000008">
    <property type="entry name" value="C2_dom"/>
</dbReference>
<dbReference type="InterPro" id="IPR035892">
    <property type="entry name" value="C2_domain_sf"/>
</dbReference>
<dbReference type="InterPro" id="IPR011009">
    <property type="entry name" value="Kinase-like_dom_sf"/>
</dbReference>
<dbReference type="InterPro" id="IPR000403">
    <property type="entry name" value="PI3/4_kinase_cat_dom"/>
</dbReference>
<dbReference type="InterPro" id="IPR036940">
    <property type="entry name" value="PI3/4_kinase_cat_sf"/>
</dbReference>
<dbReference type="InterPro" id="IPR018936">
    <property type="entry name" value="PI3/4_kinase_CS"/>
</dbReference>
<dbReference type="InterPro" id="IPR002420">
    <property type="entry name" value="PI3K-type_C2_dom"/>
</dbReference>
<dbReference type="InterPro" id="IPR001263">
    <property type="entry name" value="PI3K_accessory_dom"/>
</dbReference>
<dbReference type="InterPro" id="IPR042236">
    <property type="entry name" value="PI3K_accessory_sf"/>
</dbReference>
<dbReference type="InterPro" id="IPR000341">
    <property type="entry name" value="PI3K_Ras-bd_dom"/>
</dbReference>
<dbReference type="InterPro" id="IPR015433">
    <property type="entry name" value="PI_Kinase"/>
</dbReference>
<dbReference type="InterPro" id="IPR001683">
    <property type="entry name" value="PX_dom"/>
</dbReference>
<dbReference type="InterPro" id="IPR036871">
    <property type="entry name" value="PX_dom_sf"/>
</dbReference>
<dbReference type="InterPro" id="IPR029071">
    <property type="entry name" value="Ubiquitin-like_domsf"/>
</dbReference>
<dbReference type="PANTHER" id="PTHR10048:SF29">
    <property type="entry name" value="PHOSPHATIDYLINOSITOL 3-KINASE C2 DOMAIN-CONTAINING SUBUNIT GAMMA"/>
    <property type="match status" value="1"/>
</dbReference>
<dbReference type="PANTHER" id="PTHR10048">
    <property type="entry name" value="PHOSPHATIDYLINOSITOL KINASE"/>
    <property type="match status" value="1"/>
</dbReference>
<dbReference type="Pfam" id="PF00168">
    <property type="entry name" value="C2"/>
    <property type="match status" value="1"/>
</dbReference>
<dbReference type="Pfam" id="PF00454">
    <property type="entry name" value="PI3_PI4_kinase"/>
    <property type="match status" value="1"/>
</dbReference>
<dbReference type="Pfam" id="PF00792">
    <property type="entry name" value="PI3K_C2"/>
    <property type="match status" value="1"/>
</dbReference>
<dbReference type="Pfam" id="PF00794">
    <property type="entry name" value="PI3K_rbd"/>
    <property type="match status" value="1"/>
</dbReference>
<dbReference type="Pfam" id="PF00613">
    <property type="entry name" value="PI3Ka"/>
    <property type="match status" value="1"/>
</dbReference>
<dbReference type="Pfam" id="PF00787">
    <property type="entry name" value="PX"/>
    <property type="match status" value="1"/>
</dbReference>
<dbReference type="SMART" id="SM00239">
    <property type="entry name" value="C2"/>
    <property type="match status" value="2"/>
</dbReference>
<dbReference type="SMART" id="SM00142">
    <property type="entry name" value="PI3K_C2"/>
    <property type="match status" value="1"/>
</dbReference>
<dbReference type="SMART" id="SM00145">
    <property type="entry name" value="PI3Ka"/>
    <property type="match status" value="1"/>
</dbReference>
<dbReference type="SMART" id="SM00146">
    <property type="entry name" value="PI3Kc"/>
    <property type="match status" value="1"/>
</dbReference>
<dbReference type="SMART" id="SM00312">
    <property type="entry name" value="PX"/>
    <property type="match status" value="1"/>
</dbReference>
<dbReference type="SUPFAM" id="SSF48371">
    <property type="entry name" value="ARM repeat"/>
    <property type="match status" value="1"/>
</dbReference>
<dbReference type="SUPFAM" id="SSF49562">
    <property type="entry name" value="C2 domain (Calcium/lipid-binding domain, CaLB)"/>
    <property type="match status" value="2"/>
</dbReference>
<dbReference type="SUPFAM" id="SSF56112">
    <property type="entry name" value="Protein kinase-like (PK-like)"/>
    <property type="match status" value="1"/>
</dbReference>
<dbReference type="SUPFAM" id="SSF64268">
    <property type="entry name" value="PX domain"/>
    <property type="match status" value="1"/>
</dbReference>
<dbReference type="SUPFAM" id="SSF54236">
    <property type="entry name" value="Ubiquitin-like"/>
    <property type="match status" value="1"/>
</dbReference>
<dbReference type="PROSITE" id="PS50004">
    <property type="entry name" value="C2"/>
    <property type="match status" value="1"/>
</dbReference>
<dbReference type="PROSITE" id="PS51547">
    <property type="entry name" value="C2_PI3K"/>
    <property type="match status" value="1"/>
</dbReference>
<dbReference type="PROSITE" id="PS00915">
    <property type="entry name" value="PI3_4_KINASE_1"/>
    <property type="match status" value="1"/>
</dbReference>
<dbReference type="PROSITE" id="PS00916">
    <property type="entry name" value="PI3_4_KINASE_2"/>
    <property type="match status" value="1"/>
</dbReference>
<dbReference type="PROSITE" id="PS50290">
    <property type="entry name" value="PI3_4_KINASE_3"/>
    <property type="match status" value="1"/>
</dbReference>
<dbReference type="PROSITE" id="PS51546">
    <property type="entry name" value="PI3K_RBD"/>
    <property type="match status" value="1"/>
</dbReference>
<dbReference type="PROSITE" id="PS51545">
    <property type="entry name" value="PIK_HELICAL"/>
    <property type="match status" value="1"/>
</dbReference>
<dbReference type="PROSITE" id="PS50195">
    <property type="entry name" value="PX"/>
    <property type="match status" value="1"/>
</dbReference>
<organism>
    <name type="scientific">Rattus norvegicus</name>
    <name type="common">Rat</name>
    <dbReference type="NCBI Taxonomy" id="10116"/>
    <lineage>
        <taxon>Eukaryota</taxon>
        <taxon>Metazoa</taxon>
        <taxon>Chordata</taxon>
        <taxon>Craniata</taxon>
        <taxon>Vertebrata</taxon>
        <taxon>Euteleostomi</taxon>
        <taxon>Mammalia</taxon>
        <taxon>Eutheria</taxon>
        <taxon>Euarchontoglires</taxon>
        <taxon>Glires</taxon>
        <taxon>Rodentia</taxon>
        <taxon>Myomorpha</taxon>
        <taxon>Muroidea</taxon>
        <taxon>Muridae</taxon>
        <taxon>Murinae</taxon>
        <taxon>Rattus</taxon>
    </lineage>
</organism>